<sequence length="207" mass="24125">MEGDSRAATASQYQPACPTRDACVYSSCYCEENIWKLCEYIKTHNQYLLEECYAVFISNEKKMVPIWKQQARPENGPVIWDYHVVLLHVSREGQSFIYDLDTILPFPCPFDIYIEDALKSDDDIHPQFRRKFRVVRADSYLKNFASDRSHMKDSSGNWREPPPEYPCIETGDSKMNLNDFISMDPAVGWGAVYTLSEFVHRFSSKNY</sequence>
<proteinExistence type="evidence at transcript level"/>
<reference key="1">
    <citation type="journal article" date="2004" name="Genome Res.">
        <title>The status, quality, and expansion of the NIH full-length cDNA project: the Mammalian Gene Collection (MGC).</title>
        <authorList>
            <consortium name="The MGC Project Team"/>
        </authorList>
    </citation>
    <scope>NUCLEOTIDE SEQUENCE [LARGE SCALE MRNA]</scope>
    <source>
        <tissue>Ovary</tissue>
    </source>
</reference>
<protein>
    <recommendedName>
        <fullName evidence="4">Protein N-terminal glutamine amidohydrolase</fullName>
        <ecNumber evidence="2">3.5.1.122</ecNumber>
    </recommendedName>
    <alternativeName>
        <fullName>Protein NH2-terminal glutamine deamidase</fullName>
        <shortName>N-terminal Gln amidase</shortName>
        <shortName>Nt(Q)-amidase</shortName>
    </alternativeName>
    <alternativeName>
        <fullName>WDYHV motif-containing protein 1</fullName>
    </alternativeName>
</protein>
<keyword id="KW-0963">Cytoplasm</keyword>
<keyword id="KW-0378">Hydrolase</keyword>
<keyword id="KW-0539">Nucleus</keyword>
<keyword id="KW-1185">Reference proteome</keyword>
<dbReference type="EC" id="3.5.1.122" evidence="2"/>
<dbReference type="EMBL" id="BC091306">
    <property type="protein sequence ID" value="AAH91306.1"/>
    <property type="molecule type" value="mRNA"/>
</dbReference>
<dbReference type="RefSeq" id="NP_001020195.1">
    <property type="nucleotide sequence ID" value="NM_001025024.2"/>
</dbReference>
<dbReference type="SMR" id="Q5BJV9"/>
<dbReference type="FunCoup" id="Q5BJV9">
    <property type="interactions" value="2558"/>
</dbReference>
<dbReference type="STRING" id="10116.ENSRNOP00000008785"/>
<dbReference type="PhosphoSitePlus" id="Q5BJV9"/>
<dbReference type="PaxDb" id="10116-ENSRNOP00000008785"/>
<dbReference type="Ensembl" id="ENSRNOT00000008785.7">
    <property type="protein sequence ID" value="ENSRNOP00000008785.6"/>
    <property type="gene ID" value="ENSRNOG00000006700.8"/>
</dbReference>
<dbReference type="GeneID" id="362914"/>
<dbReference type="KEGG" id="rno:362914"/>
<dbReference type="UCSC" id="RGD:1311362">
    <property type="organism name" value="rat"/>
</dbReference>
<dbReference type="AGR" id="RGD:1311362"/>
<dbReference type="CTD" id="55093"/>
<dbReference type="RGD" id="1311362">
    <property type="gene designation" value="Ntaq1"/>
</dbReference>
<dbReference type="eggNOG" id="KOG3261">
    <property type="taxonomic scope" value="Eukaryota"/>
</dbReference>
<dbReference type="GeneTree" id="ENSGT00390000014398"/>
<dbReference type="InParanoid" id="Q5BJV9"/>
<dbReference type="OMA" id="GWGTVYS"/>
<dbReference type="OrthoDB" id="191192at2759"/>
<dbReference type="PhylomeDB" id="Q5BJV9"/>
<dbReference type="PRO" id="PR:Q5BJV9"/>
<dbReference type="Proteomes" id="UP000002494">
    <property type="component" value="Chromosome 7"/>
</dbReference>
<dbReference type="Bgee" id="ENSRNOG00000006700">
    <property type="expression patterns" value="Expressed in pancreas and 19 other cell types or tissues"/>
</dbReference>
<dbReference type="ExpressionAtlas" id="Q5BJV9">
    <property type="expression patterns" value="baseline and differential"/>
</dbReference>
<dbReference type="GO" id="GO:0005829">
    <property type="term" value="C:cytosol"/>
    <property type="evidence" value="ECO:0000250"/>
    <property type="project" value="UniProtKB"/>
</dbReference>
<dbReference type="GO" id="GO:0005634">
    <property type="term" value="C:nucleus"/>
    <property type="evidence" value="ECO:0000250"/>
    <property type="project" value="UniProtKB"/>
</dbReference>
<dbReference type="GO" id="GO:0008418">
    <property type="term" value="F:protein-N-terminal asparagine amidohydrolase activity"/>
    <property type="evidence" value="ECO:0007669"/>
    <property type="project" value="InterPro"/>
</dbReference>
<dbReference type="GO" id="GO:0070773">
    <property type="term" value="F:protein-N-terminal glutamine amidohydrolase activity"/>
    <property type="evidence" value="ECO:0000250"/>
    <property type="project" value="UniProtKB"/>
</dbReference>
<dbReference type="GO" id="GO:0036211">
    <property type="term" value="P:protein modification process"/>
    <property type="evidence" value="ECO:0000250"/>
    <property type="project" value="UniProtKB"/>
</dbReference>
<dbReference type="FunFam" id="3.10.620.10:FF:000001">
    <property type="entry name" value="Blast:Protein N-terminal glutamine amidohydrolase"/>
    <property type="match status" value="1"/>
</dbReference>
<dbReference type="Gene3D" id="3.10.620.10">
    <property type="entry name" value="Protein N-terminal glutamine amidohydrolase, alpha beta roll"/>
    <property type="match status" value="1"/>
</dbReference>
<dbReference type="InterPro" id="IPR037132">
    <property type="entry name" value="N_Gln_amidohydro_ab_roll_sf"/>
</dbReference>
<dbReference type="InterPro" id="IPR039733">
    <property type="entry name" value="NTAQ1"/>
</dbReference>
<dbReference type="InterPro" id="IPR023128">
    <property type="entry name" value="Prot_N_Gln_amidohydro_ab_roll"/>
</dbReference>
<dbReference type="PANTHER" id="PTHR13035">
    <property type="entry name" value="PROTEIN N-TERMINAL GLUTAMINE AMIDOHYDROLASE"/>
    <property type="match status" value="1"/>
</dbReference>
<dbReference type="PANTHER" id="PTHR13035:SF0">
    <property type="entry name" value="PROTEIN N-TERMINAL GLUTAMINE AMIDOHYDROLASE"/>
    <property type="match status" value="1"/>
</dbReference>
<dbReference type="Pfam" id="PF09764">
    <property type="entry name" value="Nt_Gln_amidase"/>
    <property type="match status" value="1"/>
</dbReference>
<organism>
    <name type="scientific">Rattus norvegicus</name>
    <name type="common">Rat</name>
    <dbReference type="NCBI Taxonomy" id="10116"/>
    <lineage>
        <taxon>Eukaryota</taxon>
        <taxon>Metazoa</taxon>
        <taxon>Chordata</taxon>
        <taxon>Craniata</taxon>
        <taxon>Vertebrata</taxon>
        <taxon>Euteleostomi</taxon>
        <taxon>Mammalia</taxon>
        <taxon>Eutheria</taxon>
        <taxon>Euarchontoglires</taxon>
        <taxon>Glires</taxon>
        <taxon>Rodentia</taxon>
        <taxon>Myomorpha</taxon>
        <taxon>Muroidea</taxon>
        <taxon>Muridae</taxon>
        <taxon>Murinae</taxon>
        <taxon>Rattus</taxon>
    </lineage>
</organism>
<accession>Q5BJV9</accession>
<gene>
    <name type="primary">Ntaq1</name>
    <name type="synonym">Wdyhv1</name>
</gene>
<comment type="function">
    <text evidence="2">Mediates the side-chain deamidation of N-terminal glutamine residues to glutamate, an important step in N-end rule pathway of protein degradation. Conversion of the resulting N-terminal glutamine to glutamate renders the protein susceptible to arginylation, polyubiquitination and degradation as specified by the N-end rule. Does not act on substrates with internal or C-terminal glutamine and does not act on non-glutamine residues in any position. Does not deaminate acetylated N-terminal glutamine. With the exception of proline, all tested second-position residues on substrate peptides do not greatly influence the activity. In contrast, a proline at position 2, virtually abolishes deamidation of N-terminal glutamine.</text>
</comment>
<comment type="catalytic activity">
    <reaction evidence="2">
        <text>N-terminal L-glutaminyl-[protein] + H2O = N-terminal L-glutamyl-[protein] + NH4(+)</text>
        <dbReference type="Rhea" id="RHEA:50680"/>
        <dbReference type="Rhea" id="RHEA-COMP:12668"/>
        <dbReference type="Rhea" id="RHEA-COMP:12777"/>
        <dbReference type="ChEBI" id="CHEBI:15377"/>
        <dbReference type="ChEBI" id="CHEBI:28938"/>
        <dbReference type="ChEBI" id="CHEBI:64721"/>
        <dbReference type="ChEBI" id="CHEBI:64722"/>
        <dbReference type="EC" id="3.5.1.122"/>
    </reaction>
</comment>
<comment type="subunit">
    <text evidence="3">Monomer.</text>
</comment>
<comment type="subcellular location">
    <subcellularLocation>
        <location evidence="2">Cytoplasm</location>
        <location evidence="2">Cytosol</location>
    </subcellularLocation>
    <subcellularLocation>
        <location evidence="2">Nucleus</location>
    </subcellularLocation>
</comment>
<comment type="similarity">
    <text evidence="4">Belongs to the NTAQ1 family.</text>
</comment>
<feature type="chain" id="PRO_0000279411" description="Protein N-terminal glutamine amidohydrolase">
    <location>
        <begin position="1"/>
        <end position="207"/>
    </location>
</feature>
<feature type="active site" evidence="1">
    <location>
        <position position="30"/>
    </location>
</feature>
<feature type="active site" evidence="1">
    <location>
        <position position="83"/>
    </location>
</feature>
<feature type="active site" evidence="1">
    <location>
        <position position="99"/>
    </location>
</feature>
<name>NTAQ1_RAT</name>
<evidence type="ECO:0000250" key="1"/>
<evidence type="ECO:0000250" key="2">
    <source>
        <dbReference type="UniProtKB" id="Q80WB5"/>
    </source>
</evidence>
<evidence type="ECO:0000250" key="3">
    <source>
        <dbReference type="UniProtKB" id="Q96HA8"/>
    </source>
</evidence>
<evidence type="ECO:0000305" key="4"/>